<proteinExistence type="inferred from homology"/>
<dbReference type="EMBL" id="CP000958">
    <property type="protein sequence ID" value="ACA89520.1"/>
    <property type="molecule type" value="Genomic_DNA"/>
</dbReference>
<dbReference type="RefSeq" id="WP_006482884.1">
    <property type="nucleotide sequence ID" value="NC_010508.1"/>
</dbReference>
<dbReference type="SMR" id="B1JU35"/>
<dbReference type="GeneID" id="98107147"/>
<dbReference type="KEGG" id="bcm:Bcenmc03_0340"/>
<dbReference type="HOGENOM" id="CLU_139869_0_1_4"/>
<dbReference type="Proteomes" id="UP000002169">
    <property type="component" value="Chromosome 1"/>
</dbReference>
<dbReference type="GO" id="GO:0005737">
    <property type="term" value="C:cytoplasm"/>
    <property type="evidence" value="ECO:0007669"/>
    <property type="project" value="UniProtKB-ARBA"/>
</dbReference>
<dbReference type="GO" id="GO:0015935">
    <property type="term" value="C:small ribosomal subunit"/>
    <property type="evidence" value="ECO:0007669"/>
    <property type="project" value="TreeGrafter"/>
</dbReference>
<dbReference type="GO" id="GO:0019843">
    <property type="term" value="F:rRNA binding"/>
    <property type="evidence" value="ECO:0007669"/>
    <property type="project" value="UniProtKB-UniRule"/>
</dbReference>
<dbReference type="GO" id="GO:0003735">
    <property type="term" value="F:structural constituent of ribosome"/>
    <property type="evidence" value="ECO:0007669"/>
    <property type="project" value="InterPro"/>
</dbReference>
<dbReference type="GO" id="GO:0006412">
    <property type="term" value="P:translation"/>
    <property type="evidence" value="ECO:0007669"/>
    <property type="project" value="UniProtKB-UniRule"/>
</dbReference>
<dbReference type="FunFam" id="1.10.287.1480:FF:000001">
    <property type="entry name" value="30S ribosomal protein S14"/>
    <property type="match status" value="1"/>
</dbReference>
<dbReference type="Gene3D" id="1.10.287.1480">
    <property type="match status" value="1"/>
</dbReference>
<dbReference type="HAMAP" id="MF_00537">
    <property type="entry name" value="Ribosomal_uS14_1"/>
    <property type="match status" value="1"/>
</dbReference>
<dbReference type="InterPro" id="IPR001209">
    <property type="entry name" value="Ribosomal_uS14"/>
</dbReference>
<dbReference type="InterPro" id="IPR023036">
    <property type="entry name" value="Ribosomal_uS14_bac/plastid"/>
</dbReference>
<dbReference type="NCBIfam" id="NF006477">
    <property type="entry name" value="PRK08881.1"/>
    <property type="match status" value="1"/>
</dbReference>
<dbReference type="PANTHER" id="PTHR19836">
    <property type="entry name" value="30S RIBOSOMAL PROTEIN S14"/>
    <property type="match status" value="1"/>
</dbReference>
<dbReference type="PANTHER" id="PTHR19836:SF19">
    <property type="entry name" value="SMALL RIBOSOMAL SUBUNIT PROTEIN US14M"/>
    <property type="match status" value="1"/>
</dbReference>
<dbReference type="Pfam" id="PF00253">
    <property type="entry name" value="Ribosomal_S14"/>
    <property type="match status" value="1"/>
</dbReference>
<dbReference type="SUPFAM" id="SSF57716">
    <property type="entry name" value="Glucocorticoid receptor-like (DNA-binding domain)"/>
    <property type="match status" value="1"/>
</dbReference>
<gene>
    <name evidence="1" type="primary">rpsN</name>
    <name type="ordered locus">Bcenmc03_0340</name>
</gene>
<evidence type="ECO:0000255" key="1">
    <source>
        <dbReference type="HAMAP-Rule" id="MF_00537"/>
    </source>
</evidence>
<evidence type="ECO:0000305" key="2"/>
<comment type="function">
    <text evidence="1">Binds 16S rRNA, required for the assembly of 30S particles and may also be responsible for determining the conformation of the 16S rRNA at the A site.</text>
</comment>
<comment type="subunit">
    <text evidence="1">Part of the 30S ribosomal subunit. Contacts proteins S3 and S10.</text>
</comment>
<comment type="similarity">
    <text evidence="1">Belongs to the universal ribosomal protein uS14 family.</text>
</comment>
<accession>B1JU35</accession>
<organism>
    <name type="scientific">Burkholderia orbicola (strain MC0-3)</name>
    <dbReference type="NCBI Taxonomy" id="406425"/>
    <lineage>
        <taxon>Bacteria</taxon>
        <taxon>Pseudomonadati</taxon>
        <taxon>Pseudomonadota</taxon>
        <taxon>Betaproteobacteria</taxon>
        <taxon>Burkholderiales</taxon>
        <taxon>Burkholderiaceae</taxon>
        <taxon>Burkholderia</taxon>
        <taxon>Burkholderia cepacia complex</taxon>
        <taxon>Burkholderia orbicola</taxon>
    </lineage>
</organism>
<name>RS14_BURO0</name>
<reference key="1">
    <citation type="submission" date="2008-02" db="EMBL/GenBank/DDBJ databases">
        <title>Complete sequence of chromosome 1 of Burkholderia cenocepacia MC0-3.</title>
        <authorList>
            <person name="Copeland A."/>
            <person name="Lucas S."/>
            <person name="Lapidus A."/>
            <person name="Barry K."/>
            <person name="Bruce D."/>
            <person name="Goodwin L."/>
            <person name="Glavina del Rio T."/>
            <person name="Dalin E."/>
            <person name="Tice H."/>
            <person name="Pitluck S."/>
            <person name="Chain P."/>
            <person name="Malfatti S."/>
            <person name="Shin M."/>
            <person name="Vergez L."/>
            <person name="Schmutz J."/>
            <person name="Larimer F."/>
            <person name="Land M."/>
            <person name="Hauser L."/>
            <person name="Kyrpides N."/>
            <person name="Mikhailova N."/>
            <person name="Tiedje J."/>
            <person name="Richardson P."/>
        </authorList>
    </citation>
    <scope>NUCLEOTIDE SEQUENCE [LARGE SCALE GENOMIC DNA]</scope>
    <source>
        <strain>MC0-3</strain>
    </source>
</reference>
<keyword id="KW-0687">Ribonucleoprotein</keyword>
<keyword id="KW-0689">Ribosomal protein</keyword>
<keyword id="KW-0694">RNA-binding</keyword>
<keyword id="KW-0699">rRNA-binding</keyword>
<protein>
    <recommendedName>
        <fullName evidence="1">Small ribosomal subunit protein uS14</fullName>
    </recommendedName>
    <alternativeName>
        <fullName evidence="2">30S ribosomal protein S14</fullName>
    </alternativeName>
</protein>
<feature type="chain" id="PRO_1000128328" description="Small ribosomal subunit protein uS14">
    <location>
        <begin position="1"/>
        <end position="101"/>
    </location>
</feature>
<sequence>MAKLALIEREKKRARLVAKFAAKREALKAIVEDQSKSEEERYEARLELQQLPRNANPTRQRNRCAITGRPRGTFRKFGLARNKIREIAFRGEIPGLTKASW</sequence>